<evidence type="ECO:0000250" key="1">
    <source>
        <dbReference type="UniProtKB" id="A0A0C5CJR8"/>
    </source>
</evidence>
<evidence type="ECO:0000250" key="2">
    <source>
        <dbReference type="UniProtKB" id="Q03023"/>
    </source>
</evidence>
<evidence type="ECO:0000255" key="3">
    <source>
        <dbReference type="PROSITE-ProRule" id="PRU10095"/>
    </source>
</evidence>
<evidence type="ECO:0000269" key="4">
    <source>
    </source>
</evidence>
<evidence type="ECO:0000269" key="5">
    <source>
    </source>
</evidence>
<evidence type="ECO:0000303" key="6">
    <source>
    </source>
</evidence>
<evidence type="ECO:0000305" key="7"/>
<evidence type="ECO:0000305" key="8">
    <source>
    </source>
</evidence>
<evidence type="ECO:0000312" key="9">
    <source>
        <dbReference type="EMBL" id="CAK14412.1"/>
    </source>
</evidence>
<feature type="chain" id="PRO_0000439891" description="Metalloprotease AprA">
    <location>
        <begin position="1"/>
        <end position="485"/>
    </location>
</feature>
<feature type="repeat" description="Hemolysin-type calcium-binding 1" evidence="1">
    <location>
        <begin position="347"/>
        <end position="364"/>
    </location>
</feature>
<feature type="repeat" description="Hemolysin-type calcium-binding 2" evidence="1">
    <location>
        <begin position="365"/>
        <end position="382"/>
    </location>
</feature>
<feature type="repeat" description="Hemolysin-type calcium-binding 3" evidence="1">
    <location>
        <begin position="383"/>
        <end position="395"/>
    </location>
</feature>
<feature type="active site" evidence="3">
    <location>
        <position position="188"/>
    </location>
</feature>
<feature type="binding site" evidence="2">
    <location>
        <position position="187"/>
    </location>
    <ligand>
        <name>Zn(2+)</name>
        <dbReference type="ChEBI" id="CHEBI:29105"/>
        <note>catalytic</note>
    </ligand>
</feature>
<feature type="binding site" evidence="2">
    <location>
        <position position="191"/>
    </location>
    <ligand>
        <name>Zn(2+)</name>
        <dbReference type="ChEBI" id="CHEBI:29105"/>
        <note>catalytic</note>
    </ligand>
</feature>
<feature type="binding site" evidence="2">
    <location>
        <position position="197"/>
    </location>
    <ligand>
        <name>Zn(2+)</name>
        <dbReference type="ChEBI" id="CHEBI:29105"/>
        <note>catalytic</note>
    </ligand>
</feature>
<feature type="binding site" evidence="2">
    <location>
        <position position="268"/>
    </location>
    <ligand>
        <name>Ca(2+)</name>
        <dbReference type="ChEBI" id="CHEBI:29108"/>
        <label>1</label>
    </ligand>
</feature>
<feature type="binding site" evidence="2">
    <location>
        <position position="270"/>
    </location>
    <ligand>
        <name>Ca(2+)</name>
        <dbReference type="ChEBI" id="CHEBI:29108"/>
        <label>1</label>
    </ligand>
</feature>
<feature type="binding site" evidence="2">
    <location>
        <position position="272"/>
    </location>
    <ligand>
        <name>Ca(2+)</name>
        <dbReference type="ChEBI" id="CHEBI:29108"/>
        <label>1</label>
    </ligand>
</feature>
<feature type="binding site" evidence="2">
    <location>
        <position position="300"/>
    </location>
    <ligand>
        <name>Ca(2+)</name>
        <dbReference type="ChEBI" id="CHEBI:29108"/>
        <label>1</label>
    </ligand>
</feature>
<feature type="binding site" evidence="2">
    <location>
        <position position="302"/>
    </location>
    <ligand>
        <name>Ca(2+)</name>
        <dbReference type="ChEBI" id="CHEBI:29108"/>
        <label>1</label>
    </ligand>
</feature>
<feature type="binding site" evidence="2">
    <location>
        <position position="303"/>
    </location>
    <ligand>
        <name>Ca(2+)</name>
        <dbReference type="ChEBI" id="CHEBI:29108"/>
        <label>2</label>
    </ligand>
</feature>
<feature type="binding site" evidence="2">
    <location>
        <position position="305"/>
    </location>
    <ligand>
        <name>Ca(2+)</name>
        <dbReference type="ChEBI" id="CHEBI:29108"/>
        <label>1</label>
    </ligand>
</feature>
<feature type="binding site" evidence="2">
    <location>
        <position position="305"/>
    </location>
    <ligand>
        <name>Ca(2+)</name>
        <dbReference type="ChEBI" id="CHEBI:29108"/>
        <label>2</label>
    </ligand>
</feature>
<feature type="binding site" evidence="2">
    <location>
        <position position="342"/>
    </location>
    <ligand>
        <name>Ca(2+)</name>
        <dbReference type="ChEBI" id="CHEBI:29108"/>
        <label>2</label>
    </ligand>
</feature>
<feature type="binding site" evidence="2">
    <location>
        <position position="344"/>
    </location>
    <ligand>
        <name>Ca(2+)</name>
        <dbReference type="ChEBI" id="CHEBI:29108"/>
        <label>2</label>
    </ligand>
</feature>
<feature type="binding site" evidence="2">
    <location>
        <position position="349"/>
    </location>
    <ligand>
        <name>Ca(2+)</name>
        <dbReference type="ChEBI" id="CHEBI:29108"/>
        <label>3</label>
    </ligand>
</feature>
<feature type="binding site" evidence="2">
    <location>
        <position position="351"/>
    </location>
    <ligand>
        <name>Ca(2+)</name>
        <dbReference type="ChEBI" id="CHEBI:29108"/>
        <label>3</label>
    </ligand>
</feature>
<feature type="binding site" evidence="2">
    <location>
        <position position="353"/>
    </location>
    <ligand>
        <name>Ca(2+)</name>
        <dbReference type="ChEBI" id="CHEBI:29108"/>
        <label>3</label>
    </ligand>
</feature>
<feature type="binding site" evidence="2">
    <location>
        <position position="358"/>
    </location>
    <ligand>
        <name>Ca(2+)</name>
        <dbReference type="ChEBI" id="CHEBI:29108"/>
        <label>4</label>
    </ligand>
</feature>
<feature type="binding site">
    <location>
        <position position="360"/>
    </location>
    <ligand>
        <name>Ca(2+)</name>
        <dbReference type="ChEBI" id="CHEBI:29108"/>
        <label>4</label>
    </ligand>
</feature>
<feature type="binding site" evidence="2">
    <location>
        <position position="362"/>
    </location>
    <ligand>
        <name>Ca(2+)</name>
        <dbReference type="ChEBI" id="CHEBI:29108"/>
        <label>4</label>
    </ligand>
</feature>
<feature type="binding site" evidence="2">
    <location>
        <position position="366"/>
    </location>
    <ligand>
        <name>Ca(2+)</name>
        <dbReference type="ChEBI" id="CHEBI:29108"/>
        <label>3</label>
    </ligand>
</feature>
<feature type="binding site" evidence="2">
    <location>
        <position position="367"/>
    </location>
    <ligand>
        <name>Ca(2+)</name>
        <dbReference type="ChEBI" id="CHEBI:29108"/>
        <label>5</label>
    </ligand>
</feature>
<feature type="binding site" evidence="2">
    <location>
        <position position="368"/>
    </location>
    <ligand>
        <name>Ca(2+)</name>
        <dbReference type="ChEBI" id="CHEBI:29108"/>
        <label>3</label>
    </ligand>
</feature>
<feature type="binding site" evidence="2">
    <location>
        <position position="369"/>
    </location>
    <ligand>
        <name>Ca(2+)</name>
        <dbReference type="ChEBI" id="CHEBI:29108"/>
        <label>5</label>
    </ligand>
</feature>
<feature type="binding site" evidence="2">
    <location>
        <position position="371"/>
    </location>
    <ligand>
        <name>Ca(2+)</name>
        <dbReference type="ChEBI" id="CHEBI:29108"/>
        <label>3</label>
    </ligand>
</feature>
<feature type="binding site" evidence="2">
    <location>
        <position position="371"/>
    </location>
    <ligand>
        <name>Ca(2+)</name>
        <dbReference type="ChEBI" id="CHEBI:29108"/>
        <label>5</label>
    </ligand>
</feature>
<feature type="binding site" evidence="2">
    <location>
        <position position="375"/>
    </location>
    <ligand>
        <name>Ca(2+)</name>
        <dbReference type="ChEBI" id="CHEBI:29108"/>
        <label>4</label>
    </ligand>
</feature>
<feature type="binding site" evidence="2">
    <location>
        <position position="376"/>
    </location>
    <ligand>
        <name>Ca(2+)</name>
        <dbReference type="ChEBI" id="CHEBI:29108"/>
        <label>6</label>
    </ligand>
</feature>
<feature type="binding site" evidence="2">
    <location>
        <position position="377"/>
    </location>
    <ligand>
        <name>Ca(2+)</name>
        <dbReference type="ChEBI" id="CHEBI:29108"/>
        <label>4</label>
    </ligand>
</feature>
<feature type="binding site" evidence="2">
    <location>
        <position position="378"/>
    </location>
    <ligand>
        <name>Ca(2+)</name>
        <dbReference type="ChEBI" id="CHEBI:29108"/>
        <label>6</label>
    </ligand>
</feature>
<feature type="binding site" evidence="2">
    <location>
        <position position="380"/>
    </location>
    <ligand>
        <name>Ca(2+)</name>
        <dbReference type="ChEBI" id="CHEBI:29108"/>
        <label>4</label>
    </ligand>
</feature>
<feature type="binding site" evidence="2">
    <location>
        <position position="380"/>
    </location>
    <ligand>
        <name>Ca(2+)</name>
        <dbReference type="ChEBI" id="CHEBI:29108"/>
        <label>6</label>
    </ligand>
</feature>
<feature type="binding site" evidence="2">
    <location>
        <position position="384"/>
    </location>
    <ligand>
        <name>Ca(2+)</name>
        <dbReference type="ChEBI" id="CHEBI:29108"/>
        <label>5</label>
    </ligand>
</feature>
<feature type="binding site" evidence="2">
    <location>
        <position position="385"/>
    </location>
    <ligand>
        <name>Ca(2+)</name>
        <dbReference type="ChEBI" id="CHEBI:29108"/>
        <label>7</label>
    </ligand>
</feature>
<feature type="binding site" evidence="2">
    <location>
        <position position="386"/>
    </location>
    <ligand>
        <name>Ca(2+)</name>
        <dbReference type="ChEBI" id="CHEBI:29108"/>
        <label>5</label>
    </ligand>
</feature>
<feature type="binding site" evidence="2">
    <location>
        <position position="387"/>
    </location>
    <ligand>
        <name>Ca(2+)</name>
        <dbReference type="ChEBI" id="CHEBI:29108"/>
        <label>7</label>
    </ligand>
</feature>
<feature type="binding site" evidence="2">
    <location>
        <position position="389"/>
    </location>
    <ligand>
        <name>Ca(2+)</name>
        <dbReference type="ChEBI" id="CHEBI:29108"/>
        <label>5</label>
    </ligand>
</feature>
<feature type="binding site" evidence="2">
    <location>
        <position position="389"/>
    </location>
    <ligand>
        <name>Ca(2+)</name>
        <dbReference type="ChEBI" id="CHEBI:29108"/>
        <label>7</label>
    </ligand>
</feature>
<feature type="binding site" evidence="2">
    <location>
        <position position="398"/>
    </location>
    <ligand>
        <name>Ca(2+)</name>
        <dbReference type="ChEBI" id="CHEBI:29108"/>
        <label>6</label>
    </ligand>
</feature>
<feature type="binding site" evidence="2">
    <location>
        <position position="405"/>
    </location>
    <ligand>
        <name>Ca(2+)</name>
        <dbReference type="ChEBI" id="CHEBI:29108"/>
        <label>6</label>
    </ligand>
</feature>
<feature type="binding site" evidence="2">
    <location>
        <position position="415"/>
    </location>
    <ligand>
        <name>Ca(2+)</name>
        <dbReference type="ChEBI" id="CHEBI:29108"/>
        <label>7</label>
    </ligand>
</feature>
<feature type="binding site" evidence="2">
    <location>
        <position position="461"/>
    </location>
    <ligand>
        <name>Ca(2+)</name>
        <dbReference type="ChEBI" id="CHEBI:29108"/>
        <label>8</label>
    </ligand>
</feature>
<feature type="binding site" evidence="2">
    <location>
        <position position="463"/>
    </location>
    <ligand>
        <name>Ca(2+)</name>
        <dbReference type="ChEBI" id="CHEBI:29108"/>
        <label>8</label>
    </ligand>
</feature>
<feature type="binding site" evidence="2">
    <location>
        <position position="465"/>
    </location>
    <ligand>
        <name>Ca(2+)</name>
        <dbReference type="ChEBI" id="CHEBI:29108"/>
        <label>8</label>
    </ligand>
</feature>
<feature type="binding site" evidence="2">
    <location>
        <position position="467"/>
    </location>
    <ligand>
        <name>Ca(2+)</name>
        <dbReference type="ChEBI" id="CHEBI:29108"/>
        <label>8</label>
    </ligand>
</feature>
<feature type="binding site" evidence="2">
    <location>
        <position position="469"/>
    </location>
    <ligand>
        <name>Ca(2+)</name>
        <dbReference type="ChEBI" id="CHEBI:29108"/>
        <label>8</label>
    </ligand>
</feature>
<organism>
    <name type="scientific">Pseudomonas entomophila (strain L48)</name>
    <dbReference type="NCBI Taxonomy" id="384676"/>
    <lineage>
        <taxon>Bacteria</taxon>
        <taxon>Pseudomonadati</taxon>
        <taxon>Pseudomonadota</taxon>
        <taxon>Gammaproteobacteria</taxon>
        <taxon>Pseudomonadales</taxon>
        <taxon>Pseudomonadaceae</taxon>
        <taxon>Pseudomonas</taxon>
    </lineage>
</organism>
<comment type="function">
    <text evidence="4 5">Secreted protease which is important for P.entomophila to counteract the local immune response of Drosophila (PubMed:16789834). Can degrade antimicrobial peptides (AMPs), e.g. Diptericin and Cecropin A. Thus, protects P.entomophila from the Drosophila antimicrobial peptides produced by the gut innate immune response, and promotes bacterial persistence in the Drosophila gut and killing of the host (PubMed:16789834). Is responsible for maturation of pro-Monalysin to the active toxin Monalysin, by cleaving its N-terminus (PubMed:21980286).</text>
</comment>
<comment type="cofactor">
    <cofactor evidence="2">
        <name>Ca(2+)</name>
        <dbReference type="ChEBI" id="CHEBI:29108"/>
    </cofactor>
    <text evidence="2">Binds 8 Ca(2+) ions per subunit.</text>
</comment>
<comment type="cofactor">
    <cofactor evidence="2">
        <name>Zn(2+)</name>
        <dbReference type="ChEBI" id="CHEBI:29105"/>
    </cofactor>
    <text evidence="2">Binds 1 zinc ion per subunit.</text>
</comment>
<comment type="subcellular location">
    <subcellularLocation>
        <location evidence="4 5">Secreted</location>
    </subcellularLocation>
    <text evidence="8">Is probably secreted via the associated Type 1 transporter encoded by aprDEF.</text>
</comment>
<comment type="induction">
    <text evidence="4">Is regulated by the GacS/GacA two-component system that controls P.entomophila pathogenicity. Also seems to be regulated by PrtR.</text>
</comment>
<comment type="disruption phenotype">
    <text evidence="4 5">Inactivation of aprA attenuates both the capacity to persist in the host and pathogenicity. The deletion mutants are able to survive to wild-type levels in immune-deficient Relish flies, indicating that the protease plays an important role in protection against the Drosophila Imd-dependent immune response. Moreover, they persist less well than wild-type bacteria in imd flies over-expressing Diptericin (PubMed:16789834). Pro-Monalysin is found in supernatant derived from the aprA-deletion mutant while the mature form predominates in supernatant from wild-type P.entomophila (PubMed:21980286).</text>
</comment>
<comment type="similarity">
    <text evidence="7">Belongs to the peptidase M10B family.</text>
</comment>
<proteinExistence type="evidence at protein level"/>
<gene>
    <name evidence="6 9" type="primary">aprA</name>
    <name evidence="9" type="ordered locus">PSEEN1550</name>
</gene>
<dbReference type="EC" id="3.4.24.-" evidence="4"/>
<dbReference type="EMBL" id="CT573326">
    <property type="protein sequence ID" value="CAK14412.1"/>
    <property type="molecule type" value="Genomic_DNA"/>
</dbReference>
<dbReference type="RefSeq" id="WP_011532827.1">
    <property type="nucleotide sequence ID" value="NC_008027.1"/>
</dbReference>
<dbReference type="SMR" id="Q1ID47"/>
<dbReference type="STRING" id="384676.PSEEN1550"/>
<dbReference type="MEROPS" id="M10.062"/>
<dbReference type="GeneID" id="32804795"/>
<dbReference type="KEGG" id="pen:PSEEN1550"/>
<dbReference type="eggNOG" id="COG2931">
    <property type="taxonomic scope" value="Bacteria"/>
</dbReference>
<dbReference type="HOGENOM" id="CLU_025059_1_1_6"/>
<dbReference type="OrthoDB" id="733404at2"/>
<dbReference type="Proteomes" id="UP000000658">
    <property type="component" value="Chromosome"/>
</dbReference>
<dbReference type="GO" id="GO:0005615">
    <property type="term" value="C:extracellular space"/>
    <property type="evidence" value="ECO:0007669"/>
    <property type="project" value="InterPro"/>
</dbReference>
<dbReference type="GO" id="GO:0005509">
    <property type="term" value="F:calcium ion binding"/>
    <property type="evidence" value="ECO:0007669"/>
    <property type="project" value="InterPro"/>
</dbReference>
<dbReference type="GO" id="GO:0004222">
    <property type="term" value="F:metalloendopeptidase activity"/>
    <property type="evidence" value="ECO:0007669"/>
    <property type="project" value="InterPro"/>
</dbReference>
<dbReference type="GO" id="GO:0008233">
    <property type="term" value="F:peptidase activity"/>
    <property type="evidence" value="ECO:0000315"/>
    <property type="project" value="UniProtKB"/>
</dbReference>
<dbReference type="GO" id="GO:0090729">
    <property type="term" value="F:toxin activity"/>
    <property type="evidence" value="ECO:0007669"/>
    <property type="project" value="UniProtKB-KW"/>
</dbReference>
<dbReference type="GO" id="GO:0008270">
    <property type="term" value="F:zinc ion binding"/>
    <property type="evidence" value="ECO:0007669"/>
    <property type="project" value="InterPro"/>
</dbReference>
<dbReference type="GO" id="GO:0030574">
    <property type="term" value="P:collagen catabolic process"/>
    <property type="evidence" value="ECO:0007669"/>
    <property type="project" value="TreeGrafter"/>
</dbReference>
<dbReference type="GO" id="GO:0030198">
    <property type="term" value="P:extracellular matrix organization"/>
    <property type="evidence" value="ECO:0007669"/>
    <property type="project" value="TreeGrafter"/>
</dbReference>
<dbReference type="GO" id="GO:0031638">
    <property type="term" value="P:zymogen activation"/>
    <property type="evidence" value="ECO:0000315"/>
    <property type="project" value="UniProtKB"/>
</dbReference>
<dbReference type="CDD" id="cd04277">
    <property type="entry name" value="ZnMc_serralysin_like"/>
    <property type="match status" value="1"/>
</dbReference>
<dbReference type="FunFam" id="2.150.10.10:FF:000001">
    <property type="entry name" value="Serralysin"/>
    <property type="match status" value="1"/>
</dbReference>
<dbReference type="FunFam" id="3.40.390.10:FF:000046">
    <property type="entry name" value="Serralysin"/>
    <property type="match status" value="1"/>
</dbReference>
<dbReference type="Gene3D" id="3.40.390.10">
    <property type="entry name" value="Collagenase (Catalytic Domain)"/>
    <property type="match status" value="1"/>
</dbReference>
<dbReference type="Gene3D" id="2.150.10.10">
    <property type="entry name" value="Serralysin-like metalloprotease, C-terminal"/>
    <property type="match status" value="1"/>
</dbReference>
<dbReference type="InterPro" id="IPR018511">
    <property type="entry name" value="Hemolysin-typ_Ca-bd_CS"/>
</dbReference>
<dbReference type="InterPro" id="IPR001343">
    <property type="entry name" value="Hemolysn_Ca-bd"/>
</dbReference>
<dbReference type="InterPro" id="IPR024079">
    <property type="entry name" value="MetalloPept_cat_dom_sf"/>
</dbReference>
<dbReference type="InterPro" id="IPR016294">
    <property type="entry name" value="Pept_M10B"/>
</dbReference>
<dbReference type="InterPro" id="IPR013858">
    <property type="entry name" value="Peptidase_M10B_C"/>
</dbReference>
<dbReference type="InterPro" id="IPR006026">
    <property type="entry name" value="Peptidase_Metallo"/>
</dbReference>
<dbReference type="InterPro" id="IPR034033">
    <property type="entry name" value="Serralysin-like"/>
</dbReference>
<dbReference type="InterPro" id="IPR011049">
    <property type="entry name" value="Serralysin-like_metalloprot_C"/>
</dbReference>
<dbReference type="NCBIfam" id="NF035945">
    <property type="entry name" value="Zn_serralysin"/>
    <property type="match status" value="1"/>
</dbReference>
<dbReference type="PANTHER" id="PTHR10201">
    <property type="entry name" value="MATRIX METALLOPROTEINASE"/>
    <property type="match status" value="1"/>
</dbReference>
<dbReference type="PANTHER" id="PTHR10201:SF294">
    <property type="entry name" value="MATRIX METALLOPROTEINASE 16"/>
    <property type="match status" value="1"/>
</dbReference>
<dbReference type="Pfam" id="PF00353">
    <property type="entry name" value="HemolysinCabind"/>
    <property type="match status" value="1"/>
</dbReference>
<dbReference type="Pfam" id="PF08548">
    <property type="entry name" value="Peptidase_M10_C"/>
    <property type="match status" value="1"/>
</dbReference>
<dbReference type="Pfam" id="PF13583">
    <property type="entry name" value="Reprolysin_4"/>
    <property type="match status" value="1"/>
</dbReference>
<dbReference type="PIRSF" id="PIRSF001205">
    <property type="entry name" value="Peptidase_M10B"/>
    <property type="match status" value="1"/>
</dbReference>
<dbReference type="PRINTS" id="PR00313">
    <property type="entry name" value="CABNDNGRPT"/>
</dbReference>
<dbReference type="SMART" id="SM00235">
    <property type="entry name" value="ZnMc"/>
    <property type="match status" value="1"/>
</dbReference>
<dbReference type="SUPFAM" id="SSF51120">
    <property type="entry name" value="beta-Roll"/>
    <property type="match status" value="1"/>
</dbReference>
<dbReference type="SUPFAM" id="SSF55486">
    <property type="entry name" value="Metalloproteases ('zincins'), catalytic domain"/>
    <property type="match status" value="1"/>
</dbReference>
<dbReference type="PROSITE" id="PS00330">
    <property type="entry name" value="HEMOLYSIN_CALCIUM"/>
    <property type="match status" value="1"/>
</dbReference>
<dbReference type="PROSITE" id="PS00142">
    <property type="entry name" value="ZINC_PROTEASE"/>
    <property type="match status" value="1"/>
</dbReference>
<keyword id="KW-0106">Calcium</keyword>
<keyword id="KW-0378">Hydrolase</keyword>
<keyword id="KW-0479">Metal-binding</keyword>
<keyword id="KW-0482">Metalloprotease</keyword>
<keyword id="KW-0645">Protease</keyword>
<keyword id="KW-0677">Repeat</keyword>
<keyword id="KW-0964">Secreted</keyword>
<keyword id="KW-0800">Toxin</keyword>
<keyword id="KW-0843">Virulence</keyword>
<keyword id="KW-0862">Zinc</keyword>
<accession>Q1ID47</accession>
<reference key="1">
    <citation type="journal article" date="2006" name="Nat. Biotechnol.">
        <title>Complete genome sequence of the entomopathogenic and metabolically versatile soil bacterium Pseudomonas entomophila.</title>
        <authorList>
            <person name="Vodovar N."/>
            <person name="Vallenet D."/>
            <person name="Cruveiller S."/>
            <person name="Rouy Z."/>
            <person name="Barbe V."/>
            <person name="Acosta C."/>
            <person name="Cattolico L."/>
            <person name="Jubin C."/>
            <person name="Lajus A."/>
            <person name="Segurens B."/>
            <person name="Vacherie B."/>
            <person name="Wincker P."/>
            <person name="Weissenbach J."/>
            <person name="Lemaitre B."/>
            <person name="Medigue C."/>
            <person name="Boccard F."/>
        </authorList>
    </citation>
    <scope>NUCLEOTIDE SEQUENCE [LARGE SCALE GENOMIC DNA]</scope>
    <source>
        <strain>L48</strain>
    </source>
</reference>
<reference key="2">
    <citation type="journal article" date="2006" name="PLoS Pathog.">
        <title>Prevalence of local immune response against oral infection in a Drosophila/Pseudomonas infection model.</title>
        <authorList>
            <person name="Liehl P."/>
            <person name="Blight M."/>
            <person name="Vodovar N."/>
            <person name="Boccard F."/>
            <person name="Lemaitre B."/>
        </authorList>
    </citation>
    <scope>FUNCTION</scope>
    <scope>SUBCELLULAR LOCATION</scope>
    <scope>INDUCTION</scope>
    <scope>DISRUPTION PHENOTYPE</scope>
    <scope>IDENTIFICATION BY MASS SPECTROMETRY</scope>
</reference>
<reference key="3">
    <citation type="journal article" date="2011" name="PLoS Pathog.">
        <title>Monalysin, a novel beta-pore-forming toxin from the Drosophila pathogen Pseudomonas entomophila, contributes to host intestinal damage and lethality.</title>
        <authorList>
            <person name="Opota O."/>
            <person name="Vallet-Gely I."/>
            <person name="Vincentelli R."/>
            <person name="Kellenberger C."/>
            <person name="Iacovache I."/>
            <person name="Gonzalez M.R."/>
            <person name="Roussel A."/>
            <person name="van der Goot F.G."/>
            <person name="Lemaitre B."/>
        </authorList>
    </citation>
    <scope>FUNCTION</scope>
    <scope>SUBCELLULAR LOCATION</scope>
    <scope>DISRUPTION PHENOTYPE</scope>
</reference>
<protein>
    <recommendedName>
        <fullName evidence="6">Metalloprotease AprA</fullName>
        <ecNumber evidence="4">3.4.24.-</ecNumber>
    </recommendedName>
</protein>
<name>APRA_PSEE4</name>
<sequence>MSKVKESAIVSATSALQPQGPSSSYGLINSFAHQYDRGGANVNGKPSYTVDQAANYLLRDGAAWKDLNKDGTISLSYTFLTKAPSDFYSRGLGTFSQFSDLQKGQAKLAMQSWADVAKVTFTEAASGGDGHMTFGNFSASNGGAAFAYLPFDMPGSHKGESWYLINSSYQVNTTPGTGNYGRQTLTHEIGHVLGLSHPGDYNAGEGNPTYRDATYAQDTRGYSVMSYWSESNTGQNFVKAGGQYYASAPLMDDIAAIQKLYGANYATRSGDTVYGFNSNADRDFYSATSSSSKLVFSVWDGGGNDTFDFSGFTQNQKINLNETSFSDVGGMIGNVSIAKGVTIENAFGGSGNDLLIGNALANVLKGGAGNDIIYGGGGADQLWGGTGADTFVFGAISDSTKAAPDRIMDFTSGQDKIDLSAISAFAVNKLPLQFVNAFTGHAGEAVLSYDQGTNLGSLSIDFTGNSSADFLVTTVGQAAVTDIVV</sequence>